<dbReference type="EC" id="2.7.12.1"/>
<dbReference type="EMBL" id="BC104550">
    <property type="protein sequence ID" value="AAI04551.1"/>
    <property type="molecule type" value="mRNA"/>
</dbReference>
<dbReference type="RefSeq" id="NP_001029420.1">
    <property type="nucleotide sequence ID" value="NM_001034248.1"/>
</dbReference>
<dbReference type="RefSeq" id="XP_005221975.1">
    <property type="nucleotide sequence ID" value="XM_005221918.5"/>
</dbReference>
<dbReference type="RefSeq" id="XP_059734949.1">
    <property type="nucleotide sequence ID" value="XM_059878966.1"/>
</dbReference>
<dbReference type="SMR" id="Q3SX21"/>
<dbReference type="FunCoup" id="Q3SX21">
    <property type="interactions" value="2870"/>
</dbReference>
<dbReference type="STRING" id="9913.ENSBTAP00000009609"/>
<dbReference type="PaxDb" id="9913-ENSBTAP00000009609"/>
<dbReference type="Ensembl" id="ENSBTAT00000009609.7">
    <property type="protein sequence ID" value="ENSBTAP00000009609.5"/>
    <property type="gene ID" value="ENSBTAG00000007304.7"/>
</dbReference>
<dbReference type="GeneID" id="505499"/>
<dbReference type="KEGG" id="bta:505499"/>
<dbReference type="CTD" id="1198"/>
<dbReference type="VEuPathDB" id="HostDB:ENSBTAG00000007304"/>
<dbReference type="VGNC" id="VGNC:27450">
    <property type="gene designation" value="CLK3"/>
</dbReference>
<dbReference type="eggNOG" id="KOG0671">
    <property type="taxonomic scope" value="Eukaryota"/>
</dbReference>
<dbReference type="GeneTree" id="ENSGT00940000160359"/>
<dbReference type="HOGENOM" id="CLU_000288_5_16_1"/>
<dbReference type="InParanoid" id="Q3SX21"/>
<dbReference type="OMA" id="IYAVCLM"/>
<dbReference type="OrthoDB" id="283111at2759"/>
<dbReference type="TreeFam" id="TF101041"/>
<dbReference type="Proteomes" id="UP000009136">
    <property type="component" value="Chromosome 21"/>
</dbReference>
<dbReference type="Bgee" id="ENSBTAG00000007304">
    <property type="expression patterns" value="Expressed in saliva-secreting gland and 106 other cell types or tissues"/>
</dbReference>
<dbReference type="GO" id="GO:0001669">
    <property type="term" value="C:acrosomal vesicle"/>
    <property type="evidence" value="ECO:0007669"/>
    <property type="project" value="UniProtKB-SubCell"/>
</dbReference>
<dbReference type="GO" id="GO:0005634">
    <property type="term" value="C:nucleus"/>
    <property type="evidence" value="ECO:0000250"/>
    <property type="project" value="UniProtKB"/>
</dbReference>
<dbReference type="GO" id="GO:0005524">
    <property type="term" value="F:ATP binding"/>
    <property type="evidence" value="ECO:0007669"/>
    <property type="project" value="UniProtKB-KW"/>
</dbReference>
<dbReference type="GO" id="GO:0106310">
    <property type="term" value="F:protein serine kinase activity"/>
    <property type="evidence" value="ECO:0007669"/>
    <property type="project" value="RHEA"/>
</dbReference>
<dbReference type="GO" id="GO:0004674">
    <property type="term" value="F:protein serine/threonine kinase activity"/>
    <property type="evidence" value="ECO:0000250"/>
    <property type="project" value="UniProtKB"/>
</dbReference>
<dbReference type="GO" id="GO:0004712">
    <property type="term" value="F:protein serine/threonine/tyrosine kinase activity"/>
    <property type="evidence" value="ECO:0007669"/>
    <property type="project" value="UniProtKB-EC"/>
</dbReference>
<dbReference type="GO" id="GO:0004713">
    <property type="term" value="F:protein tyrosine kinase activity"/>
    <property type="evidence" value="ECO:0000318"/>
    <property type="project" value="GO_Central"/>
</dbReference>
<dbReference type="GO" id="GO:0043484">
    <property type="term" value="P:regulation of RNA splicing"/>
    <property type="evidence" value="ECO:0000250"/>
    <property type="project" value="UniProtKB"/>
</dbReference>
<dbReference type="CDD" id="cd14214">
    <property type="entry name" value="PKc_CLK3"/>
    <property type="match status" value="1"/>
</dbReference>
<dbReference type="FunFam" id="1.10.510.10:FF:000145">
    <property type="entry name" value="Dual specificity protein kinase CLK2"/>
    <property type="match status" value="1"/>
</dbReference>
<dbReference type="FunFam" id="3.30.200.20:FF:000061">
    <property type="entry name" value="Dual specificity protein kinase CLK2"/>
    <property type="match status" value="1"/>
</dbReference>
<dbReference type="Gene3D" id="3.30.200.20">
    <property type="entry name" value="Phosphorylase Kinase, domain 1"/>
    <property type="match status" value="1"/>
</dbReference>
<dbReference type="Gene3D" id="1.10.510.10">
    <property type="entry name" value="Transferase(Phosphotransferase) domain 1"/>
    <property type="match status" value="1"/>
</dbReference>
<dbReference type="InterPro" id="IPR051175">
    <property type="entry name" value="CLK_kinases"/>
</dbReference>
<dbReference type="InterPro" id="IPR011009">
    <property type="entry name" value="Kinase-like_dom_sf"/>
</dbReference>
<dbReference type="InterPro" id="IPR000719">
    <property type="entry name" value="Prot_kinase_dom"/>
</dbReference>
<dbReference type="InterPro" id="IPR017441">
    <property type="entry name" value="Protein_kinase_ATP_BS"/>
</dbReference>
<dbReference type="InterPro" id="IPR008271">
    <property type="entry name" value="Ser/Thr_kinase_AS"/>
</dbReference>
<dbReference type="PANTHER" id="PTHR45646:SF10">
    <property type="entry name" value="DUAL SPECIFICITY PROTEIN KINASE CLK3"/>
    <property type="match status" value="1"/>
</dbReference>
<dbReference type="PANTHER" id="PTHR45646">
    <property type="entry name" value="SERINE/THREONINE-PROTEIN KINASE DOA-RELATED"/>
    <property type="match status" value="1"/>
</dbReference>
<dbReference type="Pfam" id="PF00069">
    <property type="entry name" value="Pkinase"/>
    <property type="match status" value="1"/>
</dbReference>
<dbReference type="SMART" id="SM00220">
    <property type="entry name" value="S_TKc"/>
    <property type="match status" value="1"/>
</dbReference>
<dbReference type="SUPFAM" id="SSF56112">
    <property type="entry name" value="Protein kinase-like (PK-like)"/>
    <property type="match status" value="1"/>
</dbReference>
<dbReference type="PROSITE" id="PS00107">
    <property type="entry name" value="PROTEIN_KINASE_ATP"/>
    <property type="match status" value="1"/>
</dbReference>
<dbReference type="PROSITE" id="PS50011">
    <property type="entry name" value="PROTEIN_KINASE_DOM"/>
    <property type="match status" value="1"/>
</dbReference>
<dbReference type="PROSITE" id="PS00108">
    <property type="entry name" value="PROTEIN_KINASE_ST"/>
    <property type="match status" value="1"/>
</dbReference>
<feature type="chain" id="PRO_0000248283" description="Dual specificity protein kinase CLK3">
    <location>
        <begin position="1"/>
        <end position="490"/>
    </location>
</feature>
<feature type="domain" description="Protein kinase" evidence="3">
    <location>
        <begin position="156"/>
        <end position="472"/>
    </location>
</feature>
<feature type="region of interest" description="Disordered" evidence="5">
    <location>
        <begin position="22"/>
        <end position="138"/>
    </location>
</feature>
<feature type="compositionally biased region" description="Basic and acidic residues" evidence="5">
    <location>
        <begin position="26"/>
        <end position="56"/>
    </location>
</feature>
<feature type="compositionally biased region" description="Basic and acidic residues" evidence="5">
    <location>
        <begin position="63"/>
        <end position="76"/>
    </location>
</feature>
<feature type="compositionally biased region" description="Basic residues" evidence="5">
    <location>
        <begin position="103"/>
        <end position="116"/>
    </location>
</feature>
<feature type="compositionally biased region" description="Low complexity" evidence="5">
    <location>
        <begin position="117"/>
        <end position="130"/>
    </location>
</feature>
<feature type="active site" description="Proton acceptor" evidence="3 4">
    <location>
        <position position="283"/>
    </location>
</feature>
<feature type="binding site" evidence="3">
    <location>
        <begin position="162"/>
        <end position="170"/>
    </location>
    <ligand>
        <name>ATP</name>
        <dbReference type="ChEBI" id="CHEBI:30616"/>
    </ligand>
</feature>
<feature type="binding site" evidence="3">
    <location>
        <position position="186"/>
    </location>
    <ligand>
        <name>ATP</name>
        <dbReference type="ChEBI" id="CHEBI:30616"/>
    </ligand>
</feature>
<feature type="modified residue" description="Phosphotyrosine" evidence="2">
    <location>
        <position position="7"/>
    </location>
</feature>
<feature type="modified residue" description="Phosphoserine" evidence="2">
    <location>
        <position position="9"/>
    </location>
</feature>
<feature type="modified residue" description="Phosphoserine" evidence="2">
    <location>
        <position position="49"/>
    </location>
</feature>
<feature type="modified residue" description="Phosphoserine" evidence="2">
    <location>
        <position position="51"/>
    </location>
</feature>
<feature type="modified residue" description="Phosphoserine" evidence="2">
    <location>
        <position position="67"/>
    </location>
</feature>
<feature type="modified residue" description="Phosphoserine" evidence="2">
    <location>
        <position position="76"/>
    </location>
</feature>
<feature type="modified residue" description="Phosphoserine" evidence="2">
    <location>
        <position position="78"/>
    </location>
</feature>
<feature type="modified residue" description="Phosphoserine" evidence="2">
    <location>
        <position position="135"/>
    </location>
</feature>
<proteinExistence type="evidence at transcript level"/>
<name>CLK3_BOVIN</name>
<keyword id="KW-0067">ATP-binding</keyword>
<keyword id="KW-0963">Cytoplasm</keyword>
<keyword id="KW-0968">Cytoplasmic vesicle</keyword>
<keyword id="KW-0418">Kinase</keyword>
<keyword id="KW-0547">Nucleotide-binding</keyword>
<keyword id="KW-0539">Nucleus</keyword>
<keyword id="KW-0597">Phosphoprotein</keyword>
<keyword id="KW-1185">Reference proteome</keyword>
<keyword id="KW-0723">Serine/threonine-protein kinase</keyword>
<keyword id="KW-0808">Transferase</keyword>
<keyword id="KW-0829">Tyrosine-protein kinase</keyword>
<protein>
    <recommendedName>
        <fullName>Dual specificity protein kinase CLK3</fullName>
        <ecNumber>2.7.12.1</ecNumber>
    </recommendedName>
    <alternativeName>
        <fullName>CDC-like kinase 3</fullName>
    </alternativeName>
</protein>
<evidence type="ECO:0000250" key="1"/>
<evidence type="ECO:0000250" key="2">
    <source>
        <dbReference type="UniProtKB" id="P49761"/>
    </source>
</evidence>
<evidence type="ECO:0000255" key="3">
    <source>
        <dbReference type="PROSITE-ProRule" id="PRU00159"/>
    </source>
</evidence>
<evidence type="ECO:0000255" key="4">
    <source>
        <dbReference type="PROSITE-ProRule" id="PRU10027"/>
    </source>
</evidence>
<evidence type="ECO:0000256" key="5">
    <source>
        <dbReference type="SAM" id="MobiDB-lite"/>
    </source>
</evidence>
<evidence type="ECO:0000305" key="6"/>
<sequence length="490" mass="58628">MHHCKRYRSPEPDPYLSYRWKRRRSYSREHEGRLRYPSRREPPPRRSRSRSHDRLPYQRRYREHRDSDTYRCEDRSPSFGEDYYGSSRCHHRRRSREREPYRTRKHAHHCHKRRTRSCSSASSRSQQSSKRSSRSVEDDKEGHLVCRIGDWLQERYEIVGNLGEGTFGKVVECLDHARGKSQVALKIIRNVGKYREAARLEINVLKKIKEKDKENKFLCVLMSDWFNFHGHMCIAFELLGKNTFEFLKENNFQPYPLPHVRHMAYQLCHALRFLHENQLTHTDLKPENILFVNSEFETLYNEHKSCEEKSVKNTSIRVADFGSATFDHEHHTTIVATRHYRPPEVILELGWAQPCDVWSIGCILFEYYRGFTLFQTHENREHLVMMEKILGPIPSHMIHRTRKQKYFYKGGLVWDENSSDGRYVKENCKPLKSYMLQDTLEHVQLFDLMRRMLEFDPAQRITLAEALLHPFFAGLTPEERSFHTSRNPSR</sequence>
<organism>
    <name type="scientific">Bos taurus</name>
    <name type="common">Bovine</name>
    <dbReference type="NCBI Taxonomy" id="9913"/>
    <lineage>
        <taxon>Eukaryota</taxon>
        <taxon>Metazoa</taxon>
        <taxon>Chordata</taxon>
        <taxon>Craniata</taxon>
        <taxon>Vertebrata</taxon>
        <taxon>Euteleostomi</taxon>
        <taxon>Mammalia</taxon>
        <taxon>Eutheria</taxon>
        <taxon>Laurasiatheria</taxon>
        <taxon>Artiodactyla</taxon>
        <taxon>Ruminantia</taxon>
        <taxon>Pecora</taxon>
        <taxon>Bovidae</taxon>
        <taxon>Bovinae</taxon>
        <taxon>Bos</taxon>
    </lineage>
</organism>
<comment type="function">
    <text evidence="1">Dual specificity kinase acting on both serine/threonine and tyrosine-containing substrates. Phosphorylates serine- and arginine-rich (SR) proteins of the spliceosomal complex. May be a constituent of a network of regulatory mechanisms that enable SR proteins to control RNA splicing and can cause redistribution of SR proteins from speckles to a diffuse nucleoplasmic distribution. Phosphorylates SRSF1 and SRSF3. Regulates the alternative splicing of tissue factor (F3) pre-mRNA in endothelial cells (By similarity).</text>
</comment>
<comment type="catalytic activity">
    <reaction>
        <text>L-seryl-[protein] + ATP = O-phospho-L-seryl-[protein] + ADP + H(+)</text>
        <dbReference type="Rhea" id="RHEA:17989"/>
        <dbReference type="Rhea" id="RHEA-COMP:9863"/>
        <dbReference type="Rhea" id="RHEA-COMP:11604"/>
        <dbReference type="ChEBI" id="CHEBI:15378"/>
        <dbReference type="ChEBI" id="CHEBI:29999"/>
        <dbReference type="ChEBI" id="CHEBI:30616"/>
        <dbReference type="ChEBI" id="CHEBI:83421"/>
        <dbReference type="ChEBI" id="CHEBI:456216"/>
        <dbReference type="EC" id="2.7.12.1"/>
    </reaction>
</comment>
<comment type="catalytic activity">
    <reaction>
        <text>L-threonyl-[protein] + ATP = O-phospho-L-threonyl-[protein] + ADP + H(+)</text>
        <dbReference type="Rhea" id="RHEA:46608"/>
        <dbReference type="Rhea" id="RHEA-COMP:11060"/>
        <dbReference type="Rhea" id="RHEA-COMP:11605"/>
        <dbReference type="ChEBI" id="CHEBI:15378"/>
        <dbReference type="ChEBI" id="CHEBI:30013"/>
        <dbReference type="ChEBI" id="CHEBI:30616"/>
        <dbReference type="ChEBI" id="CHEBI:61977"/>
        <dbReference type="ChEBI" id="CHEBI:456216"/>
        <dbReference type="EC" id="2.7.12.1"/>
    </reaction>
</comment>
<comment type="catalytic activity">
    <reaction>
        <text>L-tyrosyl-[protein] + ATP = O-phospho-L-tyrosyl-[protein] + ADP + H(+)</text>
        <dbReference type="Rhea" id="RHEA:10596"/>
        <dbReference type="Rhea" id="RHEA-COMP:10136"/>
        <dbReference type="Rhea" id="RHEA-COMP:20101"/>
        <dbReference type="ChEBI" id="CHEBI:15378"/>
        <dbReference type="ChEBI" id="CHEBI:30616"/>
        <dbReference type="ChEBI" id="CHEBI:46858"/>
        <dbReference type="ChEBI" id="CHEBI:61978"/>
        <dbReference type="ChEBI" id="CHEBI:456216"/>
        <dbReference type="EC" id="2.7.12.1"/>
    </reaction>
</comment>
<comment type="activity regulation">
    <text evidence="1">Leucettine L41 inhibits its kinase activity and affects the regulation of alternative splicing mediated by phosphorylation of SR proteins.</text>
</comment>
<comment type="subcellular location">
    <subcellularLocation>
        <location evidence="1">Nucleus</location>
    </subcellularLocation>
    <subcellularLocation>
        <location evidence="1">Cytoplasm</location>
    </subcellularLocation>
    <subcellularLocation>
        <location evidence="1">Cytoplasmic vesicle</location>
        <location evidence="1">Secretory vesicle</location>
        <location evidence="1">Acrosome</location>
    </subcellularLocation>
</comment>
<comment type="PTM">
    <text evidence="1">Autophosphorylates on all three types of residues.</text>
</comment>
<comment type="similarity">
    <text evidence="6">Belongs to the protein kinase superfamily. CMGC Ser/Thr protein kinase family. Lammer subfamily.</text>
</comment>
<reference key="1">
    <citation type="submission" date="2005-09" db="EMBL/GenBank/DDBJ databases">
        <authorList>
            <consortium name="NIH - Mammalian Gene Collection (MGC) project"/>
        </authorList>
    </citation>
    <scope>NUCLEOTIDE SEQUENCE [LARGE SCALE MRNA]</scope>
    <source>
        <strain>Hereford</strain>
        <tissue>Uterus</tissue>
    </source>
</reference>
<accession>Q3SX21</accession>
<gene>
    <name type="primary">CLK3</name>
</gene>